<feature type="chain" id="PRO_0000301262" description="Probable protein phosphatase 2C 23">
    <location>
        <begin position="1"/>
        <end position="654"/>
    </location>
</feature>
<feature type="domain" description="PPM-type phosphatase" evidence="3">
    <location>
        <begin position="243"/>
        <end position="645"/>
    </location>
</feature>
<feature type="region of interest" description="Disordered" evidence="4">
    <location>
        <begin position="11"/>
        <end position="30"/>
    </location>
</feature>
<feature type="region of interest" description="Disordered" evidence="4">
    <location>
        <begin position="309"/>
        <end position="336"/>
    </location>
</feature>
<feature type="binding site" evidence="1">
    <location>
        <position position="280"/>
    </location>
    <ligand>
        <name>Mn(2+)</name>
        <dbReference type="ChEBI" id="CHEBI:29035"/>
        <label>1</label>
    </ligand>
</feature>
<feature type="binding site" evidence="1">
    <location>
        <position position="280"/>
    </location>
    <ligand>
        <name>Mn(2+)</name>
        <dbReference type="ChEBI" id="CHEBI:29035"/>
        <label>2</label>
    </ligand>
</feature>
<feature type="binding site" evidence="1">
    <location>
        <position position="281"/>
    </location>
    <ligand>
        <name>Mn(2+)</name>
        <dbReference type="ChEBI" id="CHEBI:29035"/>
        <label>1</label>
    </ligand>
</feature>
<feature type="binding site" evidence="1">
    <location>
        <position position="573"/>
    </location>
    <ligand>
        <name>Mn(2+)</name>
        <dbReference type="ChEBI" id="CHEBI:29035"/>
        <label>2</label>
    </ligand>
</feature>
<feature type="binding site" evidence="1">
    <location>
        <position position="636"/>
    </location>
    <ligand>
        <name>Mn(2+)</name>
        <dbReference type="ChEBI" id="CHEBI:29035"/>
        <label>2</label>
    </ligand>
</feature>
<feature type="modified residue" description="Phosphoserine" evidence="2">
    <location>
        <position position="147"/>
    </location>
</feature>
<sequence>MGNGIGKLSKCLTGGAGRNKKPELSILEPDPLDEGLGHSFCYVRPDPTRVSSSKVHSEEETTTFRTISGASVSANTATPLSTSLYDPYGHIDRAAAFESTTSFSSIPLQPIPRSSGPIVPGSGPLERGFLSGPIERGFMSGPLDGSSGPIDGKTGSDQFQRSFSHGLANLRVGSRKGSLVRVLRRAISKTITRGQNSIVAPIKPVKEPDWVFGSDKTRIHQIENNLTVNSLNFSSEGSLLDDDVSLESQNLQWAQGKAGEDRVHVVVSEEHGWLFVGIYDGFNGPDAPDYLLSHLYPAVHRELKGLLWDDPKTDAKSSDEADVENRDSSSEKKSKNWEESQRRWRCEWDRDLDRLLKDRSNGLDLDPDPNSSDVLKALSQALRKTEEAYLENADMMLDENPELALMGSCVLVMLMKGEDVYLMNVGDSRAVLGQKAESDYWIGKIKQDLERINEETMNDFDGCGDGEGASLVPTLSAFQLTVDHSTNVEEEVNRIRKEHPDDASAVSNERVKGSLKVTRAFGAGFLKQPKWNNALLEMFQIDYKGTSPYINCLPSLYHHRLGSKDQFLILSSDGLYQYFTNEEAVSEVELFITLQPEGDPAQHLVQELLFRAAKKAGMDFHELLEIPQGERRRYHDDVSIVVISLEGRMWKSCV</sequence>
<proteinExistence type="evidence at transcript level"/>
<dbReference type="EC" id="3.1.3.16"/>
<dbReference type="EMBL" id="AC005727">
    <property type="protein sequence ID" value="AAC79593.1"/>
    <property type="molecule type" value="Genomic_DNA"/>
</dbReference>
<dbReference type="EMBL" id="CP002685">
    <property type="protein sequence ID" value="AEC08185.1"/>
    <property type="molecule type" value="Genomic_DNA"/>
</dbReference>
<dbReference type="EMBL" id="AY065299">
    <property type="protein sequence ID" value="AAL38775.1"/>
    <property type="molecule type" value="mRNA"/>
</dbReference>
<dbReference type="EMBL" id="AY096450">
    <property type="protein sequence ID" value="AAM20090.1"/>
    <property type="molecule type" value="mRNA"/>
</dbReference>
<dbReference type="PIR" id="B84690">
    <property type="entry name" value="B84690"/>
</dbReference>
<dbReference type="RefSeq" id="NP_180455.1">
    <property type="nucleotide sequence ID" value="NM_128448.4"/>
</dbReference>
<dbReference type="SMR" id="Q9ZV25"/>
<dbReference type="FunCoup" id="Q9ZV25">
    <property type="interactions" value="431"/>
</dbReference>
<dbReference type="STRING" id="3702.Q9ZV25"/>
<dbReference type="iPTMnet" id="Q9ZV25"/>
<dbReference type="PaxDb" id="3702-AT2G28890.1"/>
<dbReference type="ProteomicsDB" id="248706"/>
<dbReference type="EnsemblPlants" id="AT2G28890.1">
    <property type="protein sequence ID" value="AT2G28890.1"/>
    <property type="gene ID" value="AT2G28890"/>
</dbReference>
<dbReference type="GeneID" id="817438"/>
<dbReference type="Gramene" id="AT2G28890.1">
    <property type="protein sequence ID" value="AT2G28890.1"/>
    <property type="gene ID" value="AT2G28890"/>
</dbReference>
<dbReference type="KEGG" id="ath:AT2G28890"/>
<dbReference type="Araport" id="AT2G28890"/>
<dbReference type="TAIR" id="AT2G28890">
    <property type="gene designation" value="PLL4"/>
</dbReference>
<dbReference type="eggNOG" id="KOG0700">
    <property type="taxonomic scope" value="Eukaryota"/>
</dbReference>
<dbReference type="HOGENOM" id="CLU_013173_12_1_1"/>
<dbReference type="InParanoid" id="Q9ZV25"/>
<dbReference type="OMA" id="FPLMISD"/>
<dbReference type="PhylomeDB" id="Q9ZV25"/>
<dbReference type="PRO" id="PR:Q9ZV25"/>
<dbReference type="Proteomes" id="UP000006548">
    <property type="component" value="Chromosome 2"/>
</dbReference>
<dbReference type="ExpressionAtlas" id="Q9ZV25">
    <property type="expression patterns" value="baseline and differential"/>
</dbReference>
<dbReference type="GO" id="GO:0005634">
    <property type="term" value="C:nucleus"/>
    <property type="evidence" value="ECO:0007669"/>
    <property type="project" value="UniProtKB-SubCell"/>
</dbReference>
<dbReference type="GO" id="GO:0046872">
    <property type="term" value="F:metal ion binding"/>
    <property type="evidence" value="ECO:0007669"/>
    <property type="project" value="UniProtKB-KW"/>
</dbReference>
<dbReference type="GO" id="GO:0004722">
    <property type="term" value="F:protein serine/threonine phosphatase activity"/>
    <property type="evidence" value="ECO:0007669"/>
    <property type="project" value="UniProtKB-EC"/>
</dbReference>
<dbReference type="GO" id="GO:0048366">
    <property type="term" value="P:leaf development"/>
    <property type="evidence" value="ECO:0000315"/>
    <property type="project" value="TAIR"/>
</dbReference>
<dbReference type="CDD" id="cd00143">
    <property type="entry name" value="PP2Cc"/>
    <property type="match status" value="1"/>
</dbReference>
<dbReference type="FunFam" id="3.60.40.10:FF:000050">
    <property type="entry name" value="probable protein phosphatase 2C 4"/>
    <property type="match status" value="1"/>
</dbReference>
<dbReference type="Gene3D" id="3.60.40.10">
    <property type="entry name" value="PPM-type phosphatase domain"/>
    <property type="match status" value="1"/>
</dbReference>
<dbReference type="InterPro" id="IPR015655">
    <property type="entry name" value="PP2C"/>
</dbReference>
<dbReference type="InterPro" id="IPR036457">
    <property type="entry name" value="PPM-type-like_dom_sf"/>
</dbReference>
<dbReference type="InterPro" id="IPR001932">
    <property type="entry name" value="PPM-type_phosphatase-like_dom"/>
</dbReference>
<dbReference type="PANTHER" id="PTHR13832">
    <property type="entry name" value="PROTEIN PHOSPHATASE 2C"/>
    <property type="match status" value="1"/>
</dbReference>
<dbReference type="PANTHER" id="PTHR13832:SF228">
    <property type="entry name" value="PROTEIN PHOSPHATASE 2C 23-RELATED"/>
    <property type="match status" value="1"/>
</dbReference>
<dbReference type="Pfam" id="PF00481">
    <property type="entry name" value="PP2C"/>
    <property type="match status" value="2"/>
</dbReference>
<dbReference type="SMART" id="SM00332">
    <property type="entry name" value="PP2Cc"/>
    <property type="match status" value="1"/>
</dbReference>
<dbReference type="SUPFAM" id="SSF81606">
    <property type="entry name" value="PP2C-like"/>
    <property type="match status" value="1"/>
</dbReference>
<dbReference type="PROSITE" id="PS51746">
    <property type="entry name" value="PPM_2"/>
    <property type="match status" value="1"/>
</dbReference>
<gene>
    <name type="primary">PLL4</name>
    <name type="ordered locus">At2g28890</name>
    <name type="ORF">F8N16.18</name>
</gene>
<name>P2C23_ARATH</name>
<keyword id="KW-0217">Developmental protein</keyword>
<keyword id="KW-0378">Hydrolase</keyword>
<keyword id="KW-0460">Magnesium</keyword>
<keyword id="KW-0464">Manganese</keyword>
<keyword id="KW-0479">Metal-binding</keyword>
<keyword id="KW-0539">Nucleus</keyword>
<keyword id="KW-0597">Phosphoprotein</keyword>
<keyword id="KW-0904">Protein phosphatase</keyword>
<keyword id="KW-1185">Reference proteome</keyword>
<comment type="function">
    <text evidence="5">Involved in leaf development regulation.</text>
</comment>
<comment type="catalytic activity">
    <reaction>
        <text>O-phospho-L-seryl-[protein] + H2O = L-seryl-[protein] + phosphate</text>
        <dbReference type="Rhea" id="RHEA:20629"/>
        <dbReference type="Rhea" id="RHEA-COMP:9863"/>
        <dbReference type="Rhea" id="RHEA-COMP:11604"/>
        <dbReference type="ChEBI" id="CHEBI:15377"/>
        <dbReference type="ChEBI" id="CHEBI:29999"/>
        <dbReference type="ChEBI" id="CHEBI:43474"/>
        <dbReference type="ChEBI" id="CHEBI:83421"/>
        <dbReference type="EC" id="3.1.3.16"/>
    </reaction>
</comment>
<comment type="catalytic activity">
    <reaction>
        <text>O-phospho-L-threonyl-[protein] + H2O = L-threonyl-[protein] + phosphate</text>
        <dbReference type="Rhea" id="RHEA:47004"/>
        <dbReference type="Rhea" id="RHEA-COMP:11060"/>
        <dbReference type="Rhea" id="RHEA-COMP:11605"/>
        <dbReference type="ChEBI" id="CHEBI:15377"/>
        <dbReference type="ChEBI" id="CHEBI:30013"/>
        <dbReference type="ChEBI" id="CHEBI:43474"/>
        <dbReference type="ChEBI" id="CHEBI:61977"/>
        <dbReference type="EC" id="3.1.3.16"/>
    </reaction>
</comment>
<comment type="cofactor">
    <cofactor evidence="1">
        <name>Mg(2+)</name>
        <dbReference type="ChEBI" id="CHEBI:18420"/>
    </cofactor>
    <cofactor evidence="1">
        <name>Mn(2+)</name>
        <dbReference type="ChEBI" id="CHEBI:29035"/>
    </cofactor>
    <text evidence="1">Binds 2 magnesium or manganese ions per subunit.</text>
</comment>
<comment type="subcellular location">
    <subcellularLocation>
        <location evidence="6">Nucleus</location>
    </subcellularLocation>
</comment>
<comment type="tissue specificity">
    <text evidence="5">Expressed in seedlings, roots, leaves, stems, young inflorescences, flowers and siliques.</text>
</comment>
<comment type="domain">
    <text>The conserved PP2C phosphatase domain (244-643) is interrupted by an insertion of approximately 100 amino acids.</text>
</comment>
<comment type="disruption phenotype">
    <text evidence="5">Plants show abnormal leaves altered in shape and curling.</text>
</comment>
<comment type="similarity">
    <text evidence="6">Belongs to the PP2C family.</text>
</comment>
<protein>
    <recommendedName>
        <fullName>Probable protein phosphatase 2C 23</fullName>
        <shortName>AtPP2C23</shortName>
        <ecNumber>3.1.3.16</ecNumber>
    </recommendedName>
    <alternativeName>
        <fullName>Protein POLTERGEIST-LIKE 4</fullName>
    </alternativeName>
    <alternativeName>
        <fullName>Protein phosphatase 2C PLL4</fullName>
        <shortName>PP2C PLL4</shortName>
    </alternativeName>
</protein>
<organism>
    <name type="scientific">Arabidopsis thaliana</name>
    <name type="common">Mouse-ear cress</name>
    <dbReference type="NCBI Taxonomy" id="3702"/>
    <lineage>
        <taxon>Eukaryota</taxon>
        <taxon>Viridiplantae</taxon>
        <taxon>Streptophyta</taxon>
        <taxon>Embryophyta</taxon>
        <taxon>Tracheophyta</taxon>
        <taxon>Spermatophyta</taxon>
        <taxon>Magnoliopsida</taxon>
        <taxon>eudicotyledons</taxon>
        <taxon>Gunneridae</taxon>
        <taxon>Pentapetalae</taxon>
        <taxon>rosids</taxon>
        <taxon>malvids</taxon>
        <taxon>Brassicales</taxon>
        <taxon>Brassicaceae</taxon>
        <taxon>Camelineae</taxon>
        <taxon>Arabidopsis</taxon>
    </lineage>
</organism>
<reference key="1">
    <citation type="journal article" date="1999" name="Nature">
        <title>Sequence and analysis of chromosome 2 of the plant Arabidopsis thaliana.</title>
        <authorList>
            <person name="Lin X."/>
            <person name="Kaul S."/>
            <person name="Rounsley S.D."/>
            <person name="Shea T.P."/>
            <person name="Benito M.-I."/>
            <person name="Town C.D."/>
            <person name="Fujii C.Y."/>
            <person name="Mason T.M."/>
            <person name="Bowman C.L."/>
            <person name="Barnstead M.E."/>
            <person name="Feldblyum T.V."/>
            <person name="Buell C.R."/>
            <person name="Ketchum K.A."/>
            <person name="Lee J.J."/>
            <person name="Ronning C.M."/>
            <person name="Koo H.L."/>
            <person name="Moffat K.S."/>
            <person name="Cronin L.A."/>
            <person name="Shen M."/>
            <person name="Pai G."/>
            <person name="Van Aken S."/>
            <person name="Umayam L."/>
            <person name="Tallon L.J."/>
            <person name="Gill J.E."/>
            <person name="Adams M.D."/>
            <person name="Carrera A.J."/>
            <person name="Creasy T.H."/>
            <person name="Goodman H.M."/>
            <person name="Somerville C.R."/>
            <person name="Copenhaver G.P."/>
            <person name="Preuss D."/>
            <person name="Nierman W.C."/>
            <person name="White O."/>
            <person name="Eisen J.A."/>
            <person name="Salzberg S.L."/>
            <person name="Fraser C.M."/>
            <person name="Venter J.C."/>
        </authorList>
    </citation>
    <scope>NUCLEOTIDE SEQUENCE [LARGE SCALE GENOMIC DNA]</scope>
    <source>
        <strain>cv. Columbia</strain>
    </source>
</reference>
<reference key="2">
    <citation type="journal article" date="2017" name="Plant J.">
        <title>Araport11: a complete reannotation of the Arabidopsis thaliana reference genome.</title>
        <authorList>
            <person name="Cheng C.Y."/>
            <person name="Krishnakumar V."/>
            <person name="Chan A.P."/>
            <person name="Thibaud-Nissen F."/>
            <person name="Schobel S."/>
            <person name="Town C.D."/>
        </authorList>
    </citation>
    <scope>GENOME REANNOTATION</scope>
    <source>
        <strain>cv. Columbia</strain>
    </source>
</reference>
<reference key="3">
    <citation type="journal article" date="2003" name="Science">
        <title>Empirical analysis of transcriptional activity in the Arabidopsis genome.</title>
        <authorList>
            <person name="Yamada K."/>
            <person name="Lim J."/>
            <person name="Dale J.M."/>
            <person name="Chen H."/>
            <person name="Shinn P."/>
            <person name="Palm C.J."/>
            <person name="Southwick A.M."/>
            <person name="Wu H.C."/>
            <person name="Kim C.J."/>
            <person name="Nguyen M."/>
            <person name="Pham P.K."/>
            <person name="Cheuk R.F."/>
            <person name="Karlin-Newmann G."/>
            <person name="Liu S.X."/>
            <person name="Lam B."/>
            <person name="Sakano H."/>
            <person name="Wu T."/>
            <person name="Yu G."/>
            <person name="Miranda M."/>
            <person name="Quach H.L."/>
            <person name="Tripp M."/>
            <person name="Chang C.H."/>
            <person name="Lee J.M."/>
            <person name="Toriumi M.J."/>
            <person name="Chan M.M."/>
            <person name="Tang C.C."/>
            <person name="Onodera C.S."/>
            <person name="Deng J.M."/>
            <person name="Akiyama K."/>
            <person name="Ansari Y."/>
            <person name="Arakawa T."/>
            <person name="Banh J."/>
            <person name="Banno F."/>
            <person name="Bowser L."/>
            <person name="Brooks S.Y."/>
            <person name="Carninci P."/>
            <person name="Chao Q."/>
            <person name="Choy N."/>
            <person name="Enju A."/>
            <person name="Goldsmith A.D."/>
            <person name="Gurjal M."/>
            <person name="Hansen N.F."/>
            <person name="Hayashizaki Y."/>
            <person name="Johnson-Hopson C."/>
            <person name="Hsuan V.W."/>
            <person name="Iida K."/>
            <person name="Karnes M."/>
            <person name="Khan S."/>
            <person name="Koesema E."/>
            <person name="Ishida J."/>
            <person name="Jiang P.X."/>
            <person name="Jones T."/>
            <person name="Kawai J."/>
            <person name="Kamiya A."/>
            <person name="Meyers C."/>
            <person name="Nakajima M."/>
            <person name="Narusaka M."/>
            <person name="Seki M."/>
            <person name="Sakurai T."/>
            <person name="Satou M."/>
            <person name="Tamse R."/>
            <person name="Vaysberg M."/>
            <person name="Wallender E.K."/>
            <person name="Wong C."/>
            <person name="Yamamura Y."/>
            <person name="Yuan S."/>
            <person name="Shinozaki K."/>
            <person name="Davis R.W."/>
            <person name="Theologis A."/>
            <person name="Ecker J.R."/>
        </authorList>
    </citation>
    <scope>NUCLEOTIDE SEQUENCE [LARGE SCALE MRNA]</scope>
    <source>
        <strain>cv. Columbia</strain>
    </source>
</reference>
<reference key="4">
    <citation type="journal article" date="2005" name="Dev. Biol.">
        <title>POL and related phosphatases are dosage-sensitive regulators of meristem and organ development in Arabidopsis.</title>
        <authorList>
            <person name="Song S.-K."/>
            <person name="Clark S.E."/>
        </authorList>
    </citation>
    <scope>FUNCTION</scope>
    <scope>TISSUE SPECIFICITY</scope>
    <scope>GENE FAMILY</scope>
    <scope>NOMENCLATURE</scope>
    <scope>DISRUPTION PHENOTYPE</scope>
</reference>
<reference key="5">
    <citation type="journal article" date="2008" name="BMC Genomics">
        <title>Genome-wide and expression analysis of protein phosphatase 2C in rice and Arabidopsis.</title>
        <authorList>
            <person name="Xue T."/>
            <person name="Wang D."/>
            <person name="Zhang S."/>
            <person name="Ehlting J."/>
            <person name="Ni F."/>
            <person name="Jacab S."/>
            <person name="Zheng C."/>
            <person name="Zhong Y."/>
        </authorList>
    </citation>
    <scope>GENE FAMILY</scope>
    <scope>NOMENCLATURE</scope>
</reference>
<evidence type="ECO:0000250" key="1"/>
<evidence type="ECO:0000250" key="2">
    <source>
        <dbReference type="UniProtKB" id="Q8RWN7"/>
    </source>
</evidence>
<evidence type="ECO:0000255" key="3">
    <source>
        <dbReference type="PROSITE-ProRule" id="PRU01082"/>
    </source>
</evidence>
<evidence type="ECO:0000256" key="4">
    <source>
        <dbReference type="SAM" id="MobiDB-lite"/>
    </source>
</evidence>
<evidence type="ECO:0000269" key="5">
    <source>
    </source>
</evidence>
<evidence type="ECO:0000305" key="6"/>
<accession>Q9ZV25</accession>